<comment type="function">
    <text evidence="2">Component of the molecular motor that translocates genomic DNA in empty capsid during DNA packaging. Heterooligomerize with small terminase protein to be docked on capsid portal protein. Forms a ring-like structure through which genomic DNA is translocated into the capsid. May have or induce an endonuclease activity to cleave the genome concatemer after encapsidation.</text>
</comment>
<comment type="cofactor">
    <cofactor evidence="1">
        <name>Mg(2+)</name>
        <dbReference type="ChEBI" id="CHEBI:18420"/>
    </cofactor>
    <text evidence="1">Binds 2 Mg(2+) ions per subunit.</text>
</comment>
<comment type="subunit">
    <text evidence="2">Interacts with pacA protein.</text>
</comment>
<comment type="similarity">
    <text evidence="4">Belongs to the punalikevirus large terminase family.</text>
</comment>
<protein>
    <recommendedName>
        <fullName evidence="4">Probable terminase, large subunit</fullName>
        <ecNumber evidence="4">3.1.-.-</ecNumber>
    </recommendedName>
    <alternativeName>
        <fullName>DNA-packaging protein B</fullName>
    </alternativeName>
    <alternativeName>
        <fullName>PACase B protein</fullName>
    </alternativeName>
    <alternativeName>
        <fullName>Terminase B protein</fullName>
    </alternativeName>
</protein>
<gene>
    <name type="primary">pacB</name>
</gene>
<organismHost>
    <name type="scientific">Escherichia coli</name>
    <dbReference type="NCBI Taxonomy" id="562"/>
</organismHost>
<accession>Q5XLR0</accession>
<sequence>MARSCVTDPRWRELVALYRYDWIAAADVLFGKTPTWQQDEIIESTQQDGSWTSVTSGHGTGKSDMTSIIAILFIMFFPGARVILVANKRQQVLDGIFKYIKSNWATAVSRFPWLSKYFILTETSFFEVTGKGVWTILIKSCRPGNEEALAGEHADHLLYIIDEASGVSDKAFSVITGALTGKDNRILLLSQPTRPSGYFYDSHHRLAIRPGNPDGLFTAIILNSEESPLVDAKFIRAKLAEYGGRDNPMYMIKVRGEFPKSQDGFLLGRDEVERATRRKVKIAKGWGWVACVDVAGGTGRDKSVINIMMVSGQRNKRRVINYRMLEYTDVTETQLAAKIFAECNPERFPNITIAIDGDGLGKSTADLMYERYGITVQRIRWGKKMHSREDKSLYFDMRAFANIQAAEAVKSGRMRLDKGAATIEEASKIPVGINSAGQWKVMSKEDMKKKLNLHSPDHWDTYCFAMLANYVPQDEVLSVEDEAQVDEALAWLNE</sequence>
<feature type="chain" id="PRO_0000165278" description="Probable terminase, large subunit">
    <location>
        <begin position="1"/>
        <end position="494"/>
    </location>
</feature>
<feature type="short sequence motif" description="Walker A motif">
    <location>
        <begin position="56"/>
        <end position="63"/>
    </location>
</feature>
<feature type="short sequence motif" description="Walker B motif">
    <location>
        <begin position="158"/>
        <end position="163"/>
    </location>
</feature>
<feature type="active site" description="For ATPase activity" evidence="3">
    <location>
        <position position="163"/>
    </location>
</feature>
<feature type="binding site" evidence="3">
    <location>
        <begin position="26"/>
        <end position="33"/>
    </location>
    <ligand>
        <name>ATP</name>
        <dbReference type="ChEBI" id="CHEBI:30616"/>
    </ligand>
</feature>
<feature type="binding site" evidence="1">
    <location>
        <position position="293"/>
    </location>
    <ligand>
        <name>Mg(2+)</name>
        <dbReference type="ChEBI" id="CHEBI:18420"/>
        <label>1</label>
        <note>catalytic; for nuclease activity</note>
    </ligand>
</feature>
<feature type="binding site" evidence="1">
    <location>
        <position position="293"/>
    </location>
    <ligand>
        <name>Mg(2+)</name>
        <dbReference type="ChEBI" id="CHEBI:18420"/>
        <label>2</label>
        <note>catalytic; for nuclease activity</note>
    </ligand>
</feature>
<feature type="binding site" evidence="1">
    <location>
        <position position="356"/>
    </location>
    <ligand>
        <name>Mg(2+)</name>
        <dbReference type="ChEBI" id="CHEBI:18420"/>
        <label>2</label>
        <note>catalytic; for nuclease activity</note>
    </ligand>
</feature>
<feature type="binding site" evidence="1">
    <location>
        <position position="446"/>
    </location>
    <ligand>
        <name>Mg(2+)</name>
        <dbReference type="ChEBI" id="CHEBI:18420"/>
        <label>1</label>
        <note>catalytic; for nuclease activity</note>
    </ligand>
</feature>
<dbReference type="EC" id="3.1.-.-" evidence="4"/>
<dbReference type="EMBL" id="AY751747">
    <property type="protein sequence ID" value="AAV28854.1"/>
    <property type="molecule type" value="Genomic_DNA"/>
</dbReference>
<dbReference type="RefSeq" id="YP_009914588.1">
    <property type="nucleotide sequence ID" value="NC_050152.1"/>
</dbReference>
<dbReference type="SMR" id="Q5XLR0"/>
<dbReference type="GeneID" id="58571885"/>
<dbReference type="GO" id="GO:0005524">
    <property type="term" value="F:ATP binding"/>
    <property type="evidence" value="ECO:0007669"/>
    <property type="project" value="UniProtKB-KW"/>
</dbReference>
<dbReference type="GO" id="GO:0004519">
    <property type="term" value="F:endonuclease activity"/>
    <property type="evidence" value="ECO:0007669"/>
    <property type="project" value="UniProtKB-KW"/>
</dbReference>
<dbReference type="GO" id="GO:0046872">
    <property type="term" value="F:metal ion binding"/>
    <property type="evidence" value="ECO:0007669"/>
    <property type="project" value="UniProtKB-KW"/>
</dbReference>
<dbReference type="Gene3D" id="3.30.420.240">
    <property type="match status" value="1"/>
</dbReference>
<dbReference type="Gene3D" id="3.40.50.300">
    <property type="entry name" value="P-loop containing nucleotide triphosphate hydrolases"/>
    <property type="match status" value="1"/>
</dbReference>
<dbReference type="InterPro" id="IPR027417">
    <property type="entry name" value="P-loop_NTPase"/>
</dbReference>
<evidence type="ECO:0000250" key="1">
    <source>
        <dbReference type="UniProtKB" id="P17312"/>
    </source>
</evidence>
<evidence type="ECO:0000250" key="2">
    <source>
        <dbReference type="UniProtKB" id="P27753"/>
    </source>
</evidence>
<evidence type="ECO:0000255" key="3"/>
<evidence type="ECO:0000305" key="4"/>
<keyword id="KW-0067">ATP-binding</keyword>
<keyword id="KW-0255">Endonuclease</keyword>
<keyword id="KW-0378">Hydrolase</keyword>
<keyword id="KW-0460">Magnesium</keyword>
<keyword id="KW-0479">Metal-binding</keyword>
<keyword id="KW-0540">Nuclease</keyword>
<keyword id="KW-0547">Nucleotide-binding</keyword>
<keyword id="KW-0231">Viral genome packaging</keyword>
<keyword id="KW-1188">Viral release from host cell</keyword>
<name>TERL_BPP7</name>
<proteinExistence type="inferred from homology"/>
<organism>
    <name type="scientific">Enterobacteria phage P7</name>
    <name type="common">Bacteriophage P7</name>
    <dbReference type="NCBI Taxonomy" id="10682"/>
    <lineage>
        <taxon>Viruses</taxon>
        <taxon>Duplodnaviria</taxon>
        <taxon>Heunggongvirae</taxon>
        <taxon>Uroviricota</taxon>
        <taxon>Caudoviricetes</taxon>
        <taxon>Punavirus</taxon>
        <taxon>Punavirus P1</taxon>
    </lineage>
</organism>
<reference key="1">
    <citation type="submission" date="2004-10" db="EMBL/GenBank/DDBJ databases">
        <title>Survey of the pac-c1 region in P1-related phages.</title>
        <authorList>
            <person name="Sauer B.V."/>
            <person name="McDermott J."/>
        </authorList>
    </citation>
    <scope>NUCLEOTIDE SEQUENCE [GENOMIC DNA]</scope>
</reference>
<reference key="2">
    <citation type="journal article" date="2008" name="Annu. Rev. Genet.">
        <title>The bacteriophage DNA packaging motor.</title>
        <authorList>
            <person name="Rao V.B."/>
            <person name="Feiss M."/>
        </authorList>
    </citation>
    <scope>REVIEW</scope>
</reference>